<comment type="catalytic activity">
    <reaction evidence="1">
        <text>L-citrulline + L-aspartate + ATP = 2-(N(omega)-L-arginino)succinate + AMP + diphosphate + H(+)</text>
        <dbReference type="Rhea" id="RHEA:10932"/>
        <dbReference type="ChEBI" id="CHEBI:15378"/>
        <dbReference type="ChEBI" id="CHEBI:29991"/>
        <dbReference type="ChEBI" id="CHEBI:30616"/>
        <dbReference type="ChEBI" id="CHEBI:33019"/>
        <dbReference type="ChEBI" id="CHEBI:57472"/>
        <dbReference type="ChEBI" id="CHEBI:57743"/>
        <dbReference type="ChEBI" id="CHEBI:456215"/>
        <dbReference type="EC" id="6.3.4.5"/>
    </reaction>
</comment>
<comment type="pathway">
    <text evidence="1">Amino-acid biosynthesis; L-arginine biosynthesis; L-arginine from L-ornithine and carbamoyl phosphate: step 2/3.</text>
</comment>
<comment type="subunit">
    <text evidence="1">Homotetramer.</text>
</comment>
<comment type="subcellular location">
    <subcellularLocation>
        <location evidence="1">Cytoplasm</location>
    </subcellularLocation>
</comment>
<comment type="similarity">
    <text evidence="1">Belongs to the argininosuccinate synthase family. Type 2 subfamily.</text>
</comment>
<sequence>MTTILKSLPKGENVGIAFSGGLDTSAALLWMKQKGAKVFAYTANLGQPDEADYDAIPRKAMEFGAEKARLVDCRTQLVHEGIAAIQAGAFHVSTGGIAYFNTTPLGRAVTGTMLVSAMKEDGVNIWGDGSTYKGNDIERFYRYGLLTNPALRIYKPWLDQQFIDELGGRAEMSAFMTSHGFAYKMSAEKAYSTDSNLLGATHEAKDLEHLDSGIKIVNPIMGVPFWRDDCAVKAEAVTVRFEEGQPVALNGQTFTDPVAMFYEANAIGGRHGLGMSDQIENRIIEAKSRGIYEAPGMALLHIAYERLVTGIHNEDTIEQYRINGMKLGRLLYQGRWFDSQALMLRETAQRWVARAVTGEVTLELRRGNDYSILNTVSPNLTYAPERLSMEKVEDAPFTPADRIGQLTMRNLDITDTRAKLGLYAKTGLLSSGEGTPIPQLENDKG</sequence>
<dbReference type="EC" id="6.3.4.5" evidence="1"/>
<dbReference type="EMBL" id="CP001096">
    <property type="protein sequence ID" value="ACE98957.1"/>
    <property type="molecule type" value="Genomic_DNA"/>
</dbReference>
<dbReference type="RefSeq" id="WP_011155960.1">
    <property type="nucleotide sequence ID" value="NC_011004.1"/>
</dbReference>
<dbReference type="SMR" id="B3Q9D3"/>
<dbReference type="GeneID" id="66891406"/>
<dbReference type="KEGG" id="rpt:Rpal_0397"/>
<dbReference type="HOGENOM" id="CLU_032784_4_1_5"/>
<dbReference type="OrthoDB" id="9801641at2"/>
<dbReference type="UniPathway" id="UPA00068">
    <property type="reaction ID" value="UER00113"/>
</dbReference>
<dbReference type="Proteomes" id="UP000001725">
    <property type="component" value="Chromosome"/>
</dbReference>
<dbReference type="GO" id="GO:0005737">
    <property type="term" value="C:cytoplasm"/>
    <property type="evidence" value="ECO:0007669"/>
    <property type="project" value="UniProtKB-SubCell"/>
</dbReference>
<dbReference type="GO" id="GO:0004055">
    <property type="term" value="F:argininosuccinate synthase activity"/>
    <property type="evidence" value="ECO:0007669"/>
    <property type="project" value="UniProtKB-UniRule"/>
</dbReference>
<dbReference type="GO" id="GO:0005524">
    <property type="term" value="F:ATP binding"/>
    <property type="evidence" value="ECO:0007669"/>
    <property type="project" value="UniProtKB-UniRule"/>
</dbReference>
<dbReference type="GO" id="GO:0042803">
    <property type="term" value="F:protein homodimerization activity"/>
    <property type="evidence" value="ECO:0007669"/>
    <property type="project" value="InterPro"/>
</dbReference>
<dbReference type="GO" id="GO:0000053">
    <property type="term" value="P:argininosuccinate metabolic process"/>
    <property type="evidence" value="ECO:0007669"/>
    <property type="project" value="TreeGrafter"/>
</dbReference>
<dbReference type="GO" id="GO:0006526">
    <property type="term" value="P:L-arginine biosynthetic process"/>
    <property type="evidence" value="ECO:0007669"/>
    <property type="project" value="UniProtKB-UniRule"/>
</dbReference>
<dbReference type="GO" id="GO:0000050">
    <property type="term" value="P:urea cycle"/>
    <property type="evidence" value="ECO:0007669"/>
    <property type="project" value="TreeGrafter"/>
</dbReference>
<dbReference type="CDD" id="cd01999">
    <property type="entry name" value="ASS"/>
    <property type="match status" value="1"/>
</dbReference>
<dbReference type="FunFam" id="1.10.287.400:FF:000001">
    <property type="entry name" value="Argininosuccinate synthase"/>
    <property type="match status" value="1"/>
</dbReference>
<dbReference type="Gene3D" id="1.10.287.400">
    <property type="match status" value="1"/>
</dbReference>
<dbReference type="Gene3D" id="3.90.1260.10">
    <property type="entry name" value="Argininosuccinate synthetase, chain A, domain 2"/>
    <property type="match status" value="1"/>
</dbReference>
<dbReference type="Gene3D" id="3.40.50.620">
    <property type="entry name" value="HUPs"/>
    <property type="match status" value="1"/>
</dbReference>
<dbReference type="HAMAP" id="MF_00581">
    <property type="entry name" value="Arg_succ_synth_type2"/>
    <property type="match status" value="1"/>
</dbReference>
<dbReference type="InterPro" id="IPR023437">
    <property type="entry name" value="Arg_succ_synth_type2_subfam"/>
</dbReference>
<dbReference type="InterPro" id="IPR048268">
    <property type="entry name" value="Arginosuc_syn_C"/>
</dbReference>
<dbReference type="InterPro" id="IPR048267">
    <property type="entry name" value="Arginosuc_syn_N"/>
</dbReference>
<dbReference type="InterPro" id="IPR001518">
    <property type="entry name" value="Arginosuc_synth"/>
</dbReference>
<dbReference type="InterPro" id="IPR018223">
    <property type="entry name" value="Arginosuc_synth_CS"/>
</dbReference>
<dbReference type="InterPro" id="IPR023434">
    <property type="entry name" value="Arginosuc_synth_type_1_subfam"/>
</dbReference>
<dbReference type="InterPro" id="IPR024074">
    <property type="entry name" value="AS_cat/multimer_dom_body"/>
</dbReference>
<dbReference type="InterPro" id="IPR024073">
    <property type="entry name" value="AS_multimer_C_tail"/>
</dbReference>
<dbReference type="InterPro" id="IPR014729">
    <property type="entry name" value="Rossmann-like_a/b/a_fold"/>
</dbReference>
<dbReference type="NCBIfam" id="TIGR00032">
    <property type="entry name" value="argG"/>
    <property type="match status" value="1"/>
</dbReference>
<dbReference type="NCBIfam" id="NF003779">
    <property type="entry name" value="PRK05370.1"/>
    <property type="match status" value="1"/>
</dbReference>
<dbReference type="PANTHER" id="PTHR11587">
    <property type="entry name" value="ARGININOSUCCINATE SYNTHASE"/>
    <property type="match status" value="1"/>
</dbReference>
<dbReference type="PANTHER" id="PTHR11587:SF2">
    <property type="entry name" value="ARGININOSUCCINATE SYNTHASE"/>
    <property type="match status" value="1"/>
</dbReference>
<dbReference type="Pfam" id="PF20979">
    <property type="entry name" value="Arginosuc_syn_C"/>
    <property type="match status" value="1"/>
</dbReference>
<dbReference type="Pfam" id="PF00764">
    <property type="entry name" value="Arginosuc_synth"/>
    <property type="match status" value="1"/>
</dbReference>
<dbReference type="SUPFAM" id="SSF52402">
    <property type="entry name" value="Adenine nucleotide alpha hydrolases-like"/>
    <property type="match status" value="1"/>
</dbReference>
<dbReference type="SUPFAM" id="SSF69864">
    <property type="entry name" value="Argininosuccinate synthetase, C-terminal domain"/>
    <property type="match status" value="1"/>
</dbReference>
<dbReference type="PROSITE" id="PS00564">
    <property type="entry name" value="ARGININOSUCCIN_SYN_1"/>
    <property type="match status" value="1"/>
</dbReference>
<dbReference type="PROSITE" id="PS00565">
    <property type="entry name" value="ARGININOSUCCIN_SYN_2"/>
    <property type="match status" value="1"/>
</dbReference>
<evidence type="ECO:0000255" key="1">
    <source>
        <dbReference type="HAMAP-Rule" id="MF_00581"/>
    </source>
</evidence>
<protein>
    <recommendedName>
        <fullName evidence="1">Argininosuccinate synthase</fullName>
        <ecNumber evidence="1">6.3.4.5</ecNumber>
    </recommendedName>
    <alternativeName>
        <fullName evidence="1">Citrulline--aspartate ligase</fullName>
    </alternativeName>
</protein>
<accession>B3Q9D3</accession>
<reference key="1">
    <citation type="submission" date="2008-05" db="EMBL/GenBank/DDBJ databases">
        <title>Complete sequence of Rhodopseudomonas palustris TIE-1.</title>
        <authorList>
            <consortium name="US DOE Joint Genome Institute"/>
            <person name="Lucas S."/>
            <person name="Copeland A."/>
            <person name="Lapidus A."/>
            <person name="Glavina del Rio T."/>
            <person name="Dalin E."/>
            <person name="Tice H."/>
            <person name="Pitluck S."/>
            <person name="Chain P."/>
            <person name="Malfatti S."/>
            <person name="Shin M."/>
            <person name="Vergez L."/>
            <person name="Lang D."/>
            <person name="Schmutz J."/>
            <person name="Larimer F."/>
            <person name="Land M."/>
            <person name="Hauser L."/>
            <person name="Kyrpides N."/>
            <person name="Mikhailova N."/>
            <person name="Emerson D."/>
            <person name="Newman D.K."/>
            <person name="Roden E."/>
            <person name="Richardson P."/>
        </authorList>
    </citation>
    <scope>NUCLEOTIDE SEQUENCE [LARGE SCALE GENOMIC DNA]</scope>
    <source>
        <strain>TIE-1</strain>
    </source>
</reference>
<name>ASSY_RHOPT</name>
<proteinExistence type="inferred from homology"/>
<feature type="chain" id="PRO_1000129762" description="Argininosuccinate synthase">
    <location>
        <begin position="1"/>
        <end position="445"/>
    </location>
</feature>
<feature type="binding site" evidence="1">
    <location>
        <begin position="17"/>
        <end position="25"/>
    </location>
    <ligand>
        <name>ATP</name>
        <dbReference type="ChEBI" id="CHEBI:30616"/>
    </ligand>
</feature>
<feature type="binding site" evidence="1">
    <location>
        <position position="43"/>
    </location>
    <ligand>
        <name>ATP</name>
        <dbReference type="ChEBI" id="CHEBI:30616"/>
    </ligand>
</feature>
<feature type="binding site" evidence="1">
    <location>
        <position position="99"/>
    </location>
    <ligand>
        <name>L-citrulline</name>
        <dbReference type="ChEBI" id="CHEBI:57743"/>
    </ligand>
</feature>
<feature type="binding site" evidence="1">
    <location>
        <position position="129"/>
    </location>
    <ligand>
        <name>ATP</name>
        <dbReference type="ChEBI" id="CHEBI:30616"/>
    </ligand>
</feature>
<feature type="binding site" evidence="1">
    <location>
        <position position="131"/>
    </location>
    <ligand>
        <name>ATP</name>
        <dbReference type="ChEBI" id="CHEBI:30616"/>
    </ligand>
</feature>
<feature type="binding site" evidence="1">
    <location>
        <position position="131"/>
    </location>
    <ligand>
        <name>L-aspartate</name>
        <dbReference type="ChEBI" id="CHEBI:29991"/>
    </ligand>
</feature>
<feature type="binding site" evidence="1">
    <location>
        <position position="135"/>
    </location>
    <ligand>
        <name>L-aspartate</name>
        <dbReference type="ChEBI" id="CHEBI:29991"/>
    </ligand>
</feature>
<feature type="binding site" evidence="1">
    <location>
        <position position="135"/>
    </location>
    <ligand>
        <name>L-citrulline</name>
        <dbReference type="ChEBI" id="CHEBI:57743"/>
    </ligand>
</feature>
<feature type="binding site" evidence="1">
    <location>
        <position position="136"/>
    </location>
    <ligand>
        <name>ATP</name>
        <dbReference type="ChEBI" id="CHEBI:30616"/>
    </ligand>
</feature>
<feature type="binding site" evidence="1">
    <location>
        <position position="136"/>
    </location>
    <ligand>
        <name>L-aspartate</name>
        <dbReference type="ChEBI" id="CHEBI:29991"/>
    </ligand>
</feature>
<feature type="binding site" evidence="1">
    <location>
        <position position="139"/>
    </location>
    <ligand>
        <name>L-citrulline</name>
        <dbReference type="ChEBI" id="CHEBI:57743"/>
    </ligand>
</feature>
<feature type="binding site" evidence="1">
    <location>
        <position position="192"/>
    </location>
    <ligand>
        <name>L-citrulline</name>
        <dbReference type="ChEBI" id="CHEBI:57743"/>
    </ligand>
</feature>
<feature type="binding site" evidence="1">
    <location>
        <position position="194"/>
    </location>
    <ligand>
        <name>ATP</name>
        <dbReference type="ChEBI" id="CHEBI:30616"/>
    </ligand>
</feature>
<feature type="binding site" evidence="1">
    <location>
        <position position="201"/>
    </location>
    <ligand>
        <name>L-citrulline</name>
        <dbReference type="ChEBI" id="CHEBI:57743"/>
    </ligand>
</feature>
<feature type="binding site" evidence="1">
    <location>
        <position position="203"/>
    </location>
    <ligand>
        <name>L-citrulline</name>
        <dbReference type="ChEBI" id="CHEBI:57743"/>
    </ligand>
</feature>
<feature type="binding site" evidence="1">
    <location>
        <position position="280"/>
    </location>
    <ligand>
        <name>L-citrulline</name>
        <dbReference type="ChEBI" id="CHEBI:57743"/>
    </ligand>
</feature>
<organism>
    <name type="scientific">Rhodopseudomonas palustris (strain TIE-1)</name>
    <dbReference type="NCBI Taxonomy" id="395960"/>
    <lineage>
        <taxon>Bacteria</taxon>
        <taxon>Pseudomonadati</taxon>
        <taxon>Pseudomonadota</taxon>
        <taxon>Alphaproteobacteria</taxon>
        <taxon>Hyphomicrobiales</taxon>
        <taxon>Nitrobacteraceae</taxon>
        <taxon>Rhodopseudomonas</taxon>
    </lineage>
</organism>
<gene>
    <name evidence="1" type="primary">argG</name>
    <name type="ordered locus">Rpal_0397</name>
</gene>
<keyword id="KW-0028">Amino-acid biosynthesis</keyword>
<keyword id="KW-0055">Arginine biosynthesis</keyword>
<keyword id="KW-0067">ATP-binding</keyword>
<keyword id="KW-0963">Cytoplasm</keyword>
<keyword id="KW-0436">Ligase</keyword>
<keyword id="KW-0547">Nucleotide-binding</keyword>